<evidence type="ECO:0000250" key="1">
    <source>
        <dbReference type="UniProtKB" id="P42336"/>
    </source>
</evidence>
<evidence type="ECO:0000250" key="2">
    <source>
        <dbReference type="UniProtKB" id="P42337"/>
    </source>
</evidence>
<evidence type="ECO:0000255" key="3">
    <source>
        <dbReference type="PROSITE-ProRule" id="PRU00269"/>
    </source>
</evidence>
<evidence type="ECO:0000255" key="4">
    <source>
        <dbReference type="PROSITE-ProRule" id="PRU00877"/>
    </source>
</evidence>
<evidence type="ECO:0000255" key="5">
    <source>
        <dbReference type="PROSITE-ProRule" id="PRU00878"/>
    </source>
</evidence>
<evidence type="ECO:0000255" key="6">
    <source>
        <dbReference type="PROSITE-ProRule" id="PRU00879"/>
    </source>
</evidence>
<evidence type="ECO:0000255" key="7">
    <source>
        <dbReference type="PROSITE-ProRule" id="PRU00880"/>
    </source>
</evidence>
<evidence type="ECO:0000269" key="8">
    <source>
    </source>
</evidence>
<evidence type="ECO:0000269" key="9">
    <source>
    </source>
</evidence>
<evidence type="ECO:0000269" key="10">
    <source>
    </source>
</evidence>
<evidence type="ECO:0000305" key="11">
    <source>
    </source>
</evidence>
<evidence type="ECO:0000305" key="12">
    <source>
    </source>
</evidence>
<evidence type="ECO:0000305" key="13">
    <source>
    </source>
</evidence>
<evidence type="ECO:0007829" key="14">
    <source>
        <dbReference type="PDB" id="2V1Y"/>
    </source>
</evidence>
<reference key="1">
    <citation type="journal article" date="1992" name="Cell">
        <title>Phosphatidylinositol 3-kinase: structure and expression of the 110 kd catalytic subunit.</title>
        <authorList>
            <person name="Hiles I.D."/>
            <person name="Otsu M."/>
            <person name="Volinia S."/>
            <person name="Fry M.J."/>
            <person name="Gout I."/>
            <person name="Dhand R."/>
            <person name="Panayotou G."/>
            <person name="Ruiz-Larrea F."/>
            <person name="Thompson A."/>
            <person name="Totty N.F."/>
            <person name="Hsuan J.J."/>
            <person name="Courtneidge S.A."/>
            <person name="Parker P.J."/>
            <person name="Waterfield M.D."/>
        </authorList>
    </citation>
    <scope>NUCLEOTIDE SEQUENCE [MRNA]</scope>
    <scope>PARTIAL PROTEIN SEQUENCE</scope>
    <scope>FUNCTION</scope>
    <scope>CATALYTIC ACTIVITY</scope>
    <source>
        <tissue>Brain</tissue>
    </source>
</reference>
<reference key="2">
    <citation type="journal article" date="2004" name="Biochem. Biophys. Res. Commun.">
        <title>eIF4E binding protein 1 and H-Ras are novel substrates for the protein kinase activity of class-I phosphoinositide 3-kinase.</title>
        <authorList>
            <person name="Foukas L.C."/>
            <person name="Shepherd P.R."/>
        </authorList>
    </citation>
    <scope>FUNCTION</scope>
    <scope>CATALYTIC ACTIVITY</scope>
</reference>
<reference key="3">
    <citation type="journal article" date="2004" name="Mol. Cell. Biol.">
        <title>Regulation of phosphoinositide 3-kinase by its intrinsic serine kinase activity in vivo.</title>
        <authorList>
            <person name="Foukas L.C."/>
            <person name="Beeton C.A."/>
            <person name="Jensen J."/>
            <person name="Phillips W.A."/>
            <person name="Shepherd P.R."/>
        </authorList>
    </citation>
    <scope>FUNCTION</scope>
    <scope>CATALYTIC ACTIVITY</scope>
</reference>
<accession>P32871</accession>
<proteinExistence type="evidence at protein level"/>
<sequence length="1068" mass="124328">MPPRPSSGELWGIHLMPPRILVECLLPNGMIVTLECLREATLITIKHELFKEARKYPLHQLLQDESSYIFVSVTQEAEREEFFDETRRLCDLRLFQPFLKVIEPVGNREEKILNREIGFAIGMPVCEFDMVKDPEVQDFRRNILNVCKEAVDLRDLNSPHSRAMYVYPPNVESSPELPKHIYNKLDKGQIIVVIWVIVSPNNDKQKYTLKINHDCVPEQVIAEAIRKKTRSMLLSSEQLKLCVLEYQGKYILKVCGCDEYFLEKYPLSQYKYIRSCIMLGRMPNLMLMAKESLYSQLPMDCFTMPSYSRRISTATPYMNGETSTKSLWVINSALRIKILCATYVNVNIRDIDKIYVRTGIYHGGEPLCDNVNTQRVPCSNPRWNEWLNYDIYIPDLPRAARLCLSICSVKGRKGAKEEHCPLAWGNINLFDYTDTLVSGKMALNLWPVPHGLEDLLNPIGVTGSNPNKETPCLELEFDWFSSVVKFPDMSVIEEHANWSVSREAGFSYSHAGLSNRLARDNELRENDKEQLRAICTRDPLSEITEQEKDFLWSHRHYCVTIPEILPKLLLSVKWNSRDEVAQMYCLVKDWPPIKPEQAMELLDCNYPDPMVRGFAVRCLEKYLTDDKLSQYLIQLVQVLKYEQYLDNLLVRFLLKKALTNQRIGHFFFWHLKSEMHNKTVSQRFGLLLESYCRACGMYLKHLNRQVEAMEKLINLTDILKQEKKDETQKVQMKFLVEQMRRPDFMDALQGFLSPLNPAHQLGNLRLEECRIMSSAKRPLWLNWENPDIMSELLFQNNEIIFKNGDDLRQDMLTLQIIRIMENIWQNQGLDLRMLPYGCLSIGDCVGLIEVVRNSHTIMQIQCKGGLKGALQFNSHTLHQWLKDKNKGEIYDAAIDLFTRSCAGYCVATFILGIGDRHNSNIMVKDDGQLFHIDFGHFLDHKKKKFGYKRERVPFVLTQDFLIVISKGAQECTKTREFERFQEMCYKAYLAIRQHANLFINLFSMMLGSGMPELQSFDDIAYIRKTLALDKTEQEALEYFMKQMNDAHHGGWTTKMDWIFHTIKQHALN</sequence>
<dbReference type="EC" id="2.7.1.137" evidence="8 9 13"/>
<dbReference type="EC" id="2.7.1.153" evidence="1"/>
<dbReference type="EC" id="2.7.11.1" evidence="9 10"/>
<dbReference type="EMBL" id="M93252">
    <property type="protein sequence ID" value="AAA30698.1"/>
    <property type="molecule type" value="mRNA"/>
</dbReference>
<dbReference type="PIR" id="A43322">
    <property type="entry name" value="A43322"/>
</dbReference>
<dbReference type="RefSeq" id="NP_776999.1">
    <property type="nucleotide sequence ID" value="NM_174574.1"/>
</dbReference>
<dbReference type="RefSeq" id="XP_024848781.1">
    <property type="nucleotide sequence ID" value="XM_024993013.2"/>
</dbReference>
<dbReference type="RefSeq" id="XP_024848812.1">
    <property type="nucleotide sequence ID" value="XM_024993044.2"/>
</dbReference>
<dbReference type="RefSeq" id="XP_059743896.1">
    <property type="nucleotide sequence ID" value="XM_059887913.1"/>
</dbReference>
<dbReference type="PDB" id="2V1Y">
    <property type="method" value="X-ray"/>
    <property type="resolution" value="2.40 A"/>
    <property type="chains" value="A=1-108"/>
</dbReference>
<dbReference type="PDBsum" id="2V1Y"/>
<dbReference type="SMR" id="P32871"/>
<dbReference type="CORUM" id="P32871"/>
<dbReference type="DIP" id="DIP-39319N"/>
<dbReference type="FunCoup" id="P32871">
    <property type="interactions" value="2757"/>
</dbReference>
<dbReference type="IntAct" id="P32871">
    <property type="interactions" value="4"/>
</dbReference>
<dbReference type="STRING" id="9913.ENSBTAP00000068953"/>
<dbReference type="BindingDB" id="P32871"/>
<dbReference type="ChEMBL" id="CHEMBL2498"/>
<dbReference type="iPTMnet" id="P32871"/>
<dbReference type="PaxDb" id="9913-ENSBTAP00000012168"/>
<dbReference type="Ensembl" id="ENSBTAT00000072391.2">
    <property type="protein sequence ID" value="ENSBTAP00000068953.1"/>
    <property type="gene ID" value="ENSBTAG00000009232.7"/>
</dbReference>
<dbReference type="GeneID" id="282306"/>
<dbReference type="KEGG" id="bta:282306"/>
<dbReference type="CTD" id="5290"/>
<dbReference type="VEuPathDB" id="HostDB:ENSBTAG00000009232"/>
<dbReference type="VGNC" id="VGNC:32889">
    <property type="gene designation" value="PIK3CA"/>
</dbReference>
<dbReference type="eggNOG" id="KOG0904">
    <property type="taxonomic scope" value="Eukaryota"/>
</dbReference>
<dbReference type="GeneTree" id="ENSGT00940000155531"/>
<dbReference type="HOGENOM" id="CLU_002191_1_1_1"/>
<dbReference type="InParanoid" id="P32871"/>
<dbReference type="OMA" id="RWSEWLN"/>
<dbReference type="OrthoDB" id="67688at2759"/>
<dbReference type="TreeFam" id="TF102031"/>
<dbReference type="BRENDA" id="2.7.1.137">
    <property type="organism ID" value="908"/>
</dbReference>
<dbReference type="Reactome" id="R-BTA-109704">
    <property type="pathway name" value="PI3K Cascade"/>
</dbReference>
<dbReference type="Reactome" id="R-BTA-112399">
    <property type="pathway name" value="IRS-mediated signalling"/>
</dbReference>
<dbReference type="Reactome" id="R-BTA-114604">
    <property type="pathway name" value="GPVI-mediated activation cascade"/>
</dbReference>
<dbReference type="Reactome" id="R-BTA-1250342">
    <property type="pathway name" value="PI3K events in ERBB4 signaling"/>
</dbReference>
<dbReference type="Reactome" id="R-BTA-1257604">
    <property type="pathway name" value="PIP3 activates AKT signaling"/>
</dbReference>
<dbReference type="Reactome" id="R-BTA-1433557">
    <property type="pathway name" value="Signaling by SCF-KIT"/>
</dbReference>
<dbReference type="Reactome" id="R-BTA-1660499">
    <property type="pathway name" value="Synthesis of PIPs at the plasma membrane"/>
</dbReference>
<dbReference type="Reactome" id="R-BTA-180292">
    <property type="pathway name" value="GAB1 signalosome"/>
</dbReference>
<dbReference type="Reactome" id="R-BTA-186763">
    <property type="pathway name" value="Downstream signal transduction"/>
</dbReference>
<dbReference type="Reactome" id="R-BTA-1963642">
    <property type="pathway name" value="PI3K events in ERBB2 signaling"/>
</dbReference>
<dbReference type="Reactome" id="R-BTA-198203">
    <property type="pathway name" value="PI3K/AKT activation"/>
</dbReference>
<dbReference type="Reactome" id="R-BTA-201556">
    <property type="pathway name" value="Signaling by ALK"/>
</dbReference>
<dbReference type="Reactome" id="R-BTA-202424">
    <property type="pathway name" value="Downstream TCR signaling"/>
</dbReference>
<dbReference type="Reactome" id="R-BTA-2029485">
    <property type="pathway name" value="Role of phospholipids in phagocytosis"/>
</dbReference>
<dbReference type="Reactome" id="R-BTA-210993">
    <property type="pathway name" value="Tie2 Signaling"/>
</dbReference>
<dbReference type="Reactome" id="R-BTA-2424491">
    <property type="pathway name" value="DAP12 signaling"/>
</dbReference>
<dbReference type="Reactome" id="R-BTA-2730905">
    <property type="pathway name" value="Role of LAT2/NTAL/LAB on calcium mobilization"/>
</dbReference>
<dbReference type="Reactome" id="R-BTA-389357">
    <property type="pathway name" value="CD28 dependent PI3K/Akt signaling"/>
</dbReference>
<dbReference type="Reactome" id="R-BTA-416476">
    <property type="pathway name" value="G alpha (q) signalling events"/>
</dbReference>
<dbReference type="Reactome" id="R-BTA-4420097">
    <property type="pathway name" value="VEGFA-VEGFR2 Pathway"/>
</dbReference>
<dbReference type="Reactome" id="R-BTA-512988">
    <property type="pathway name" value="Interleukin-3, Interleukin-5 and GM-CSF signaling"/>
</dbReference>
<dbReference type="Reactome" id="R-BTA-5654689">
    <property type="pathway name" value="PI-3K cascade:FGFR1"/>
</dbReference>
<dbReference type="Reactome" id="R-BTA-5654695">
    <property type="pathway name" value="PI-3K cascade:FGFR2"/>
</dbReference>
<dbReference type="Reactome" id="R-BTA-5654710">
    <property type="pathway name" value="PI-3K cascade:FGFR3"/>
</dbReference>
<dbReference type="Reactome" id="R-BTA-5654720">
    <property type="pathway name" value="PI-3K cascade:FGFR4"/>
</dbReference>
<dbReference type="Reactome" id="R-BTA-5673001">
    <property type="pathway name" value="RAF/MAP kinase cascade"/>
</dbReference>
<dbReference type="Reactome" id="R-BTA-6811558">
    <property type="pathway name" value="PI5P, PP2A and IER3 Regulate PI3K/AKT Signaling"/>
</dbReference>
<dbReference type="Reactome" id="R-BTA-8851907">
    <property type="pathway name" value="MET activates PI3K/AKT signaling"/>
</dbReference>
<dbReference type="Reactome" id="R-BTA-8853659">
    <property type="pathway name" value="RET signaling"/>
</dbReference>
<dbReference type="Reactome" id="R-BTA-9009391">
    <property type="pathway name" value="Extra-nuclear estrogen signaling"/>
</dbReference>
<dbReference type="Reactome" id="R-BTA-9013149">
    <property type="pathway name" value="RAC1 GTPase cycle"/>
</dbReference>
<dbReference type="Reactome" id="R-BTA-9013404">
    <property type="pathway name" value="RAC2 GTPase cycle"/>
</dbReference>
<dbReference type="Reactome" id="R-BTA-9027276">
    <property type="pathway name" value="Erythropoietin activates Phosphoinositide-3-kinase (PI3K)"/>
</dbReference>
<dbReference type="Reactome" id="R-BTA-912526">
    <property type="pathway name" value="Interleukin receptor SHC signaling"/>
</dbReference>
<dbReference type="Reactome" id="R-BTA-912631">
    <property type="pathway name" value="Regulation of signaling by CBL"/>
</dbReference>
<dbReference type="Reactome" id="R-BTA-9607240">
    <property type="pathway name" value="FLT3 Signaling"/>
</dbReference>
<dbReference type="Reactome" id="R-BTA-9927354">
    <property type="pathway name" value="Co-stimulation by ICOS"/>
</dbReference>
<dbReference type="SABIO-RK" id="P32871"/>
<dbReference type="UniPathway" id="UPA00220"/>
<dbReference type="EvolutionaryTrace" id="P32871"/>
<dbReference type="PRO" id="PR:P32871"/>
<dbReference type="Proteomes" id="UP000009136">
    <property type="component" value="Chromosome 1"/>
</dbReference>
<dbReference type="Bgee" id="ENSBTAG00000009232">
    <property type="expression patterns" value="Expressed in neutrophil and 113 other cell types or tissues"/>
</dbReference>
<dbReference type="GO" id="GO:0005737">
    <property type="term" value="C:cytoplasm"/>
    <property type="evidence" value="ECO:0000318"/>
    <property type="project" value="GO_Central"/>
</dbReference>
<dbReference type="GO" id="GO:0014704">
    <property type="term" value="C:intercalated disc"/>
    <property type="evidence" value="ECO:0007669"/>
    <property type="project" value="Ensembl"/>
</dbReference>
<dbReference type="GO" id="GO:0030027">
    <property type="term" value="C:lamellipodium"/>
    <property type="evidence" value="ECO:0007669"/>
    <property type="project" value="Ensembl"/>
</dbReference>
<dbReference type="GO" id="GO:0048471">
    <property type="term" value="C:perinuclear region of cytoplasm"/>
    <property type="evidence" value="ECO:0000315"/>
    <property type="project" value="BHF-UCL"/>
</dbReference>
<dbReference type="GO" id="GO:0005942">
    <property type="term" value="C:phosphatidylinositol 3-kinase complex"/>
    <property type="evidence" value="ECO:0000314"/>
    <property type="project" value="BHF-UCL"/>
</dbReference>
<dbReference type="GO" id="GO:0005943">
    <property type="term" value="C:phosphatidylinositol 3-kinase complex, class IA"/>
    <property type="evidence" value="ECO:0000318"/>
    <property type="project" value="GO_Central"/>
</dbReference>
<dbReference type="GO" id="GO:0005944">
    <property type="term" value="C:phosphatidylinositol 3-kinase complex, class IB"/>
    <property type="evidence" value="ECO:0000318"/>
    <property type="project" value="GO_Central"/>
</dbReference>
<dbReference type="GO" id="GO:0005886">
    <property type="term" value="C:plasma membrane"/>
    <property type="evidence" value="ECO:0000318"/>
    <property type="project" value="GO_Central"/>
</dbReference>
<dbReference type="GO" id="GO:0016303">
    <property type="term" value="F:1-phosphatidylinositol-3-kinase activity"/>
    <property type="evidence" value="ECO:0000314"/>
    <property type="project" value="BHF-UCL"/>
</dbReference>
<dbReference type="GO" id="GO:0046934">
    <property type="term" value="F:1-phosphatidylinositol-4,5-bisphosphate 3-kinase activity"/>
    <property type="evidence" value="ECO:0000318"/>
    <property type="project" value="GO_Central"/>
</dbReference>
<dbReference type="GO" id="GO:0035005">
    <property type="term" value="F:1-phosphatidylinositol-4-phosphate 3-kinase activity"/>
    <property type="evidence" value="ECO:0000318"/>
    <property type="project" value="GO_Central"/>
</dbReference>
<dbReference type="GO" id="GO:0005524">
    <property type="term" value="F:ATP binding"/>
    <property type="evidence" value="ECO:0007669"/>
    <property type="project" value="UniProtKB-KW"/>
</dbReference>
<dbReference type="GO" id="GO:0043560">
    <property type="term" value="F:insulin receptor substrate binding"/>
    <property type="evidence" value="ECO:0007669"/>
    <property type="project" value="Ensembl"/>
</dbReference>
<dbReference type="GO" id="GO:0030295">
    <property type="term" value="F:protein kinase activator activity"/>
    <property type="evidence" value="ECO:0007669"/>
    <property type="project" value="Ensembl"/>
</dbReference>
<dbReference type="GO" id="GO:0106310">
    <property type="term" value="F:protein serine kinase activity"/>
    <property type="evidence" value="ECO:0007669"/>
    <property type="project" value="RHEA"/>
</dbReference>
<dbReference type="GO" id="GO:0004674">
    <property type="term" value="F:protein serine/threonine kinase activity"/>
    <property type="evidence" value="ECO:0007669"/>
    <property type="project" value="UniProtKB-KW"/>
</dbReference>
<dbReference type="GO" id="GO:0030036">
    <property type="term" value="P:actin cytoskeleton organization"/>
    <property type="evidence" value="ECO:0007669"/>
    <property type="project" value="Ensembl"/>
</dbReference>
<dbReference type="GO" id="GO:0060612">
    <property type="term" value="P:adipose tissue development"/>
    <property type="evidence" value="ECO:0007669"/>
    <property type="project" value="Ensembl"/>
</dbReference>
<dbReference type="GO" id="GO:0001525">
    <property type="term" value="P:angiogenesis"/>
    <property type="evidence" value="ECO:0007669"/>
    <property type="project" value="UniProtKB-KW"/>
</dbReference>
<dbReference type="GO" id="GO:0141068">
    <property type="term" value="P:autosome genomic imprinting"/>
    <property type="evidence" value="ECO:0007669"/>
    <property type="project" value="Ensembl"/>
</dbReference>
<dbReference type="GO" id="GO:0086003">
    <property type="term" value="P:cardiac muscle cell contraction"/>
    <property type="evidence" value="ECO:0007669"/>
    <property type="project" value="Ensembl"/>
</dbReference>
<dbReference type="GO" id="GO:0016477">
    <property type="term" value="P:cell migration"/>
    <property type="evidence" value="ECO:0000318"/>
    <property type="project" value="GO_Central"/>
</dbReference>
<dbReference type="GO" id="GO:0071333">
    <property type="term" value="P:cellular response to glucose stimulus"/>
    <property type="evidence" value="ECO:0007669"/>
    <property type="project" value="Ensembl"/>
</dbReference>
<dbReference type="GO" id="GO:0071464">
    <property type="term" value="P:cellular response to hydrostatic pressure"/>
    <property type="evidence" value="ECO:0007669"/>
    <property type="project" value="Ensembl"/>
</dbReference>
<dbReference type="GO" id="GO:0097009">
    <property type="term" value="P:energy homeostasis"/>
    <property type="evidence" value="ECO:0007669"/>
    <property type="project" value="Ensembl"/>
</dbReference>
<dbReference type="GO" id="GO:0006006">
    <property type="term" value="P:glucose metabolic process"/>
    <property type="evidence" value="ECO:0007669"/>
    <property type="project" value="Ensembl"/>
</dbReference>
<dbReference type="GO" id="GO:0008286">
    <property type="term" value="P:insulin receptor signaling pathway"/>
    <property type="evidence" value="ECO:0007669"/>
    <property type="project" value="Ensembl"/>
</dbReference>
<dbReference type="GO" id="GO:0048009">
    <property type="term" value="P:insulin-like growth factor receptor signaling pathway"/>
    <property type="evidence" value="ECO:0007669"/>
    <property type="project" value="Ensembl"/>
</dbReference>
<dbReference type="GO" id="GO:0001889">
    <property type="term" value="P:liver development"/>
    <property type="evidence" value="ECO:0007669"/>
    <property type="project" value="Ensembl"/>
</dbReference>
<dbReference type="GO" id="GO:0030835">
    <property type="term" value="P:negative regulation of actin filament depolymerization"/>
    <property type="evidence" value="ECO:0007669"/>
    <property type="project" value="Ensembl"/>
</dbReference>
<dbReference type="GO" id="GO:2000811">
    <property type="term" value="P:negative regulation of anoikis"/>
    <property type="evidence" value="ECO:0007669"/>
    <property type="project" value="Ensembl"/>
</dbReference>
<dbReference type="GO" id="GO:2000270">
    <property type="term" value="P:negative regulation of fibroblast apoptotic process"/>
    <property type="evidence" value="ECO:0007669"/>
    <property type="project" value="Ensembl"/>
</dbReference>
<dbReference type="GO" id="GO:0043524">
    <property type="term" value="P:negative regulation of neuron apoptotic process"/>
    <property type="evidence" value="ECO:0007669"/>
    <property type="project" value="Ensembl"/>
</dbReference>
<dbReference type="GO" id="GO:0006909">
    <property type="term" value="P:phagocytosis"/>
    <property type="evidence" value="ECO:0007669"/>
    <property type="project" value="UniProtKB-KW"/>
</dbReference>
<dbReference type="GO" id="GO:0043491">
    <property type="term" value="P:phosphatidylinositol 3-kinase/protein kinase B signal transduction"/>
    <property type="evidence" value="ECO:0000314"/>
    <property type="project" value="BHF-UCL"/>
</dbReference>
<dbReference type="GO" id="GO:0046854">
    <property type="term" value="P:phosphatidylinositol phosphate biosynthetic process"/>
    <property type="evidence" value="ECO:0000314"/>
    <property type="project" value="BHF-UCL"/>
</dbReference>
<dbReference type="GO" id="GO:0036092">
    <property type="term" value="P:phosphatidylinositol-3-phosphate biosynthetic process"/>
    <property type="evidence" value="ECO:0000314"/>
    <property type="project" value="BHF-UCL"/>
</dbReference>
<dbReference type="GO" id="GO:0048015">
    <property type="term" value="P:phosphatidylinositol-mediated signaling"/>
    <property type="evidence" value="ECO:0000318"/>
    <property type="project" value="GO_Central"/>
</dbReference>
<dbReference type="GO" id="GO:0010592">
    <property type="term" value="P:positive regulation of lamellipodium assembly"/>
    <property type="evidence" value="ECO:0000315"/>
    <property type="project" value="BHF-UCL"/>
</dbReference>
<dbReference type="GO" id="GO:0051897">
    <property type="term" value="P:positive regulation of phosphatidylinositol 3-kinase/protein kinase B signal transduction"/>
    <property type="evidence" value="ECO:0007669"/>
    <property type="project" value="Ensembl"/>
</dbReference>
<dbReference type="GO" id="GO:1905477">
    <property type="term" value="P:positive regulation of protein localization to membrane"/>
    <property type="evidence" value="ECO:0007669"/>
    <property type="project" value="Ensembl"/>
</dbReference>
<dbReference type="GO" id="GO:0043457">
    <property type="term" value="P:regulation of cellular respiration"/>
    <property type="evidence" value="ECO:0007669"/>
    <property type="project" value="Ensembl"/>
</dbReference>
<dbReference type="GO" id="GO:0040014">
    <property type="term" value="P:regulation of multicellular organism growth"/>
    <property type="evidence" value="ECO:0007669"/>
    <property type="project" value="Ensembl"/>
</dbReference>
<dbReference type="GO" id="GO:0055119">
    <property type="term" value="P:relaxation of cardiac muscle"/>
    <property type="evidence" value="ECO:0007669"/>
    <property type="project" value="Ensembl"/>
</dbReference>
<dbReference type="GO" id="GO:0035994">
    <property type="term" value="P:response to muscle stretch"/>
    <property type="evidence" value="ECO:0007669"/>
    <property type="project" value="Ensembl"/>
</dbReference>
<dbReference type="GO" id="GO:0038084">
    <property type="term" value="P:vascular endothelial growth factor signaling pathway"/>
    <property type="evidence" value="ECO:0007669"/>
    <property type="project" value="Ensembl"/>
</dbReference>
<dbReference type="CDD" id="cd08398">
    <property type="entry name" value="C2_PI3K_class_I_alpha"/>
    <property type="match status" value="1"/>
</dbReference>
<dbReference type="CDD" id="cd00872">
    <property type="entry name" value="PI3Ka_I"/>
    <property type="match status" value="1"/>
</dbReference>
<dbReference type="CDD" id="cd05175">
    <property type="entry name" value="PI3Kc_IA_alpha"/>
    <property type="match status" value="1"/>
</dbReference>
<dbReference type="FunFam" id="1.10.1070.11:FF:000006">
    <property type="entry name" value="Phosphatidylinositol 4,5-bisphosphate 3-kinase catalytic subunit"/>
    <property type="match status" value="1"/>
</dbReference>
<dbReference type="FunFam" id="1.25.40.70:FF:000001">
    <property type="entry name" value="Phosphatidylinositol 4,5-bisphosphate 3-kinase catalytic subunit"/>
    <property type="match status" value="1"/>
</dbReference>
<dbReference type="FunFam" id="2.60.40.150:FF:000041">
    <property type="entry name" value="Phosphatidylinositol 4,5-bisphosphate 3-kinase catalytic subunit"/>
    <property type="match status" value="1"/>
</dbReference>
<dbReference type="FunFam" id="3.10.20.90:FF:000055">
    <property type="entry name" value="Phosphatidylinositol 4,5-bisphosphate 3-kinase catalytic subunit"/>
    <property type="match status" value="1"/>
</dbReference>
<dbReference type="FunFam" id="3.10.20.90:FF:000074">
    <property type="entry name" value="Phosphatidylinositol 4,5-bisphosphate 3-kinase catalytic subunit"/>
    <property type="match status" value="1"/>
</dbReference>
<dbReference type="FunFam" id="3.30.1010.10:FF:000007">
    <property type="entry name" value="Phosphatidylinositol 4,5-bisphosphate 3-kinase catalytic subunit"/>
    <property type="match status" value="1"/>
</dbReference>
<dbReference type="Gene3D" id="2.60.40.150">
    <property type="entry name" value="C2 domain"/>
    <property type="match status" value="1"/>
</dbReference>
<dbReference type="Gene3D" id="1.10.1070.11">
    <property type="entry name" value="Phosphatidylinositol 3-/4-kinase, catalytic domain"/>
    <property type="match status" value="1"/>
</dbReference>
<dbReference type="Gene3D" id="3.10.20.90">
    <property type="entry name" value="Phosphatidylinositol 3-kinase Catalytic Subunit, Chain A, domain 1"/>
    <property type="match status" value="2"/>
</dbReference>
<dbReference type="Gene3D" id="3.30.1010.10">
    <property type="entry name" value="Phosphatidylinositol 3-kinase Catalytic Subunit, Chain A, domain 4"/>
    <property type="match status" value="1"/>
</dbReference>
<dbReference type="Gene3D" id="1.25.40.70">
    <property type="entry name" value="Phosphatidylinositol 3-kinase, accessory domain (PIK)"/>
    <property type="match status" value="1"/>
</dbReference>
<dbReference type="InterPro" id="IPR016024">
    <property type="entry name" value="ARM-type_fold"/>
</dbReference>
<dbReference type="InterPro" id="IPR035892">
    <property type="entry name" value="C2_domain_sf"/>
</dbReference>
<dbReference type="InterPro" id="IPR011009">
    <property type="entry name" value="Kinase-like_dom_sf"/>
</dbReference>
<dbReference type="InterPro" id="IPR000403">
    <property type="entry name" value="PI3/4_kinase_cat_dom"/>
</dbReference>
<dbReference type="InterPro" id="IPR036940">
    <property type="entry name" value="PI3/4_kinase_cat_sf"/>
</dbReference>
<dbReference type="InterPro" id="IPR018936">
    <property type="entry name" value="PI3/4_kinase_CS"/>
</dbReference>
<dbReference type="InterPro" id="IPR002420">
    <property type="entry name" value="PI3K-type_C2_dom"/>
</dbReference>
<dbReference type="InterPro" id="IPR003113">
    <property type="entry name" value="PI3K_ABD"/>
</dbReference>
<dbReference type="InterPro" id="IPR001263">
    <property type="entry name" value="PI3K_accessory_dom"/>
</dbReference>
<dbReference type="InterPro" id="IPR042236">
    <property type="entry name" value="PI3K_accessory_sf"/>
</dbReference>
<dbReference type="InterPro" id="IPR000341">
    <property type="entry name" value="PI3K_Ras-bd_dom"/>
</dbReference>
<dbReference type="InterPro" id="IPR037704">
    <property type="entry name" value="PI3Kalpha_dom"/>
</dbReference>
<dbReference type="InterPro" id="IPR015433">
    <property type="entry name" value="PI_Kinase"/>
</dbReference>
<dbReference type="InterPro" id="IPR029071">
    <property type="entry name" value="Ubiquitin-like_domsf"/>
</dbReference>
<dbReference type="PANTHER" id="PTHR10048:SF107">
    <property type="entry name" value="PHOSPHATIDYLINOSITOL 4,5-BISPHOSPHATE 3-KINASE CATALYTIC SUBUNIT ALPHA ISOFORM"/>
    <property type="match status" value="1"/>
</dbReference>
<dbReference type="PANTHER" id="PTHR10048">
    <property type="entry name" value="PHOSPHATIDYLINOSITOL KINASE"/>
    <property type="match status" value="1"/>
</dbReference>
<dbReference type="Pfam" id="PF00454">
    <property type="entry name" value="PI3_PI4_kinase"/>
    <property type="match status" value="1"/>
</dbReference>
<dbReference type="Pfam" id="PF00792">
    <property type="entry name" value="PI3K_C2"/>
    <property type="match status" value="1"/>
</dbReference>
<dbReference type="Pfam" id="PF02192">
    <property type="entry name" value="PI3K_p85B"/>
    <property type="match status" value="1"/>
</dbReference>
<dbReference type="Pfam" id="PF00794">
    <property type="entry name" value="PI3K_rbd"/>
    <property type="match status" value="1"/>
</dbReference>
<dbReference type="Pfam" id="PF00613">
    <property type="entry name" value="PI3Ka"/>
    <property type="match status" value="1"/>
</dbReference>
<dbReference type="SMART" id="SM00142">
    <property type="entry name" value="PI3K_C2"/>
    <property type="match status" value="1"/>
</dbReference>
<dbReference type="SMART" id="SM00143">
    <property type="entry name" value="PI3K_p85B"/>
    <property type="match status" value="1"/>
</dbReference>
<dbReference type="SMART" id="SM00144">
    <property type="entry name" value="PI3K_rbd"/>
    <property type="match status" value="1"/>
</dbReference>
<dbReference type="SMART" id="SM00145">
    <property type="entry name" value="PI3Ka"/>
    <property type="match status" value="1"/>
</dbReference>
<dbReference type="SMART" id="SM00146">
    <property type="entry name" value="PI3Kc"/>
    <property type="match status" value="1"/>
</dbReference>
<dbReference type="SUPFAM" id="SSF48371">
    <property type="entry name" value="ARM repeat"/>
    <property type="match status" value="1"/>
</dbReference>
<dbReference type="SUPFAM" id="SSF49562">
    <property type="entry name" value="C2 domain (Calcium/lipid-binding domain, CaLB)"/>
    <property type="match status" value="1"/>
</dbReference>
<dbReference type="SUPFAM" id="SSF56112">
    <property type="entry name" value="Protein kinase-like (PK-like)"/>
    <property type="match status" value="1"/>
</dbReference>
<dbReference type="SUPFAM" id="SSF54236">
    <property type="entry name" value="Ubiquitin-like"/>
    <property type="match status" value="1"/>
</dbReference>
<dbReference type="PROSITE" id="PS51547">
    <property type="entry name" value="C2_PI3K"/>
    <property type="match status" value="1"/>
</dbReference>
<dbReference type="PROSITE" id="PS00915">
    <property type="entry name" value="PI3_4_KINASE_1"/>
    <property type="match status" value="1"/>
</dbReference>
<dbReference type="PROSITE" id="PS00916">
    <property type="entry name" value="PI3_4_KINASE_2"/>
    <property type="match status" value="1"/>
</dbReference>
<dbReference type="PROSITE" id="PS50290">
    <property type="entry name" value="PI3_4_KINASE_3"/>
    <property type="match status" value="1"/>
</dbReference>
<dbReference type="PROSITE" id="PS51544">
    <property type="entry name" value="PI3K_ABD"/>
    <property type="match status" value="1"/>
</dbReference>
<dbReference type="PROSITE" id="PS51546">
    <property type="entry name" value="PI3K_RBD"/>
    <property type="match status" value="1"/>
</dbReference>
<dbReference type="PROSITE" id="PS51545">
    <property type="entry name" value="PIK_HELICAL"/>
    <property type="match status" value="1"/>
</dbReference>
<comment type="function">
    <text evidence="1 2 8 9 10">Phosphoinositide-3-kinase (PI3K) phosphorylates phosphatidylinositol (PI) and its phosphorylated derivatives at position 3 of the inositol ring to produce 3-phosphoinositides (PubMed:1322797, PubMed:14729945). Uses ATP and PtdIns(4,5)P2 (phosphatidylinositol 4,5-bisphosphate) to generate phosphatidylinositol 3,4,5-trisphosphate (PIP3) (By similarity). PIP3 plays a key role by recruiting PH domain-containing proteins to the membrane, including AKT1 and PDPK1, activating signaling cascades involved in cell growth, survival, proliferation, motility and morphology. Participates in cellular signaling in response to various growth factors. Involved in the activation of AKT1 upon stimulation by receptor tyrosine kinases ligands such as EGF, insulin, IGF1, VEGFA and PDGF. Involved in signaling via insulin-receptor substrate (IRS) proteins. Essential in endothelial cell migration during vascular development through VEGFA signaling, possibly by regulating RhoA activity. Required for lymphatic vasculature development, possibly by binding to RAS and by activation by EGF and FGF2, but not by PDGF. Regulates invadopodia formation through the PDPK1-AKT1 pathway. Participates in cardiomyogenesis in embryonic stem cells through a AKT1 pathway. Participates in vasculogenesis in embryonic stem cells through PDK1 and protein kinase C pathway (By similarity). In addition to its lipid kinase activity, it displays a serine-protein kinase activity that results in the autophosphorylation of the p85alpha regulatory subunit as well as phosphorylation of other proteins such as 4EBP1, H-Ras, the IL-3 beta c receptor and possibly others (PubMed:14729945, PubMed:15178440). Plays a role in the positive regulation of phagocytosis and pinocytosis (By similarity).</text>
</comment>
<comment type="catalytic activity">
    <reaction evidence="9 10">
        <text>L-seryl-[protein] + ATP = O-phospho-L-seryl-[protein] + ADP + H(+)</text>
        <dbReference type="Rhea" id="RHEA:17989"/>
        <dbReference type="Rhea" id="RHEA-COMP:9863"/>
        <dbReference type="Rhea" id="RHEA-COMP:11604"/>
        <dbReference type="ChEBI" id="CHEBI:15378"/>
        <dbReference type="ChEBI" id="CHEBI:29999"/>
        <dbReference type="ChEBI" id="CHEBI:30616"/>
        <dbReference type="ChEBI" id="CHEBI:83421"/>
        <dbReference type="ChEBI" id="CHEBI:456216"/>
        <dbReference type="EC" id="2.7.11.1"/>
    </reaction>
    <physiologicalReaction direction="left-to-right" evidence="12 13">
        <dbReference type="Rhea" id="RHEA:17990"/>
    </physiologicalReaction>
</comment>
<comment type="catalytic activity">
    <reaction evidence="8 9 13">
        <text>a 1,2-diacyl-sn-glycero-3-phospho-(1D-myo-inositol) + ATP = a 1,2-diacyl-sn-glycero-3-phospho-(1D-myo-inositol-3-phosphate) + ADP + H(+)</text>
        <dbReference type="Rhea" id="RHEA:12709"/>
        <dbReference type="ChEBI" id="CHEBI:15378"/>
        <dbReference type="ChEBI" id="CHEBI:30616"/>
        <dbReference type="ChEBI" id="CHEBI:57880"/>
        <dbReference type="ChEBI" id="CHEBI:58088"/>
        <dbReference type="ChEBI" id="CHEBI:456216"/>
        <dbReference type="EC" id="2.7.1.137"/>
    </reaction>
    <physiologicalReaction direction="left-to-right" evidence="11 12 13">
        <dbReference type="Rhea" id="RHEA:12710"/>
    </physiologicalReaction>
</comment>
<comment type="catalytic activity">
    <reaction evidence="1">
        <text>a 1,2-diacyl-sn-glycero-3-phospho-(1D-myo-inositol-4,5-bisphosphate) + ATP = a 1,2-diacyl-sn-glycero-3-phospho-(1D-myo-inositol-3,4,5-trisphosphate) + ADP + H(+)</text>
        <dbReference type="Rhea" id="RHEA:21292"/>
        <dbReference type="ChEBI" id="CHEBI:15378"/>
        <dbReference type="ChEBI" id="CHEBI:30616"/>
        <dbReference type="ChEBI" id="CHEBI:57836"/>
        <dbReference type="ChEBI" id="CHEBI:58456"/>
        <dbReference type="ChEBI" id="CHEBI:456216"/>
        <dbReference type="EC" id="2.7.1.153"/>
    </reaction>
    <physiologicalReaction direction="left-to-right" evidence="1">
        <dbReference type="Rhea" id="RHEA:21293"/>
    </physiologicalReaction>
</comment>
<comment type="catalytic activity">
    <reaction evidence="1">
        <text>1,2-dioctanoyl-sn-glycero-3-phospho-(1D-myo-inositol-4,5-bisphosphate) + ATP = 1,2-dioctanoyl-sn-glycero-3-phospho-(1D-myo-inositol-3,4,5-trisphosphate) + ADP + H(+)</text>
        <dbReference type="Rhea" id="RHEA:55632"/>
        <dbReference type="ChEBI" id="CHEBI:15378"/>
        <dbReference type="ChEBI" id="CHEBI:30616"/>
        <dbReference type="ChEBI" id="CHEBI:83416"/>
        <dbReference type="ChEBI" id="CHEBI:83419"/>
        <dbReference type="ChEBI" id="CHEBI:456216"/>
    </reaction>
    <physiologicalReaction direction="left-to-right" evidence="1">
        <dbReference type="Rhea" id="RHEA:55633"/>
    </physiologicalReaction>
</comment>
<comment type="catalytic activity">
    <reaction evidence="1">
        <text>1-octadecanoyl-2-(5Z,8Z,11Z,14Z)-eicosatetraenoyl-sn-glycero-3-phospho-1D-myo-inositol 4,5-bisphosphate + ATP = 1-octadecanoyl-2-(5Z,8Z,11Z,14Z-eicosatetraenoyl)-sn-glycero-3-phospho-(1D-myo-inositol 3,4,5-triphosphate) + ADP + H(+)</text>
        <dbReference type="Rhea" id="RHEA:43396"/>
        <dbReference type="ChEBI" id="CHEBI:15378"/>
        <dbReference type="ChEBI" id="CHEBI:30616"/>
        <dbReference type="ChEBI" id="CHEBI:77137"/>
        <dbReference type="ChEBI" id="CHEBI:83243"/>
        <dbReference type="ChEBI" id="CHEBI:456216"/>
    </reaction>
    <physiologicalReaction direction="left-to-right" evidence="1">
        <dbReference type="Rhea" id="RHEA:43397"/>
    </physiologicalReaction>
</comment>
<comment type="pathway">
    <text evidence="11 12 13">Phospholipid metabolism; phosphatidylinositol phosphate biosynthesis.</text>
</comment>
<comment type="subunit">
    <text evidence="1 2">Heterodimer of a catalytic subunit PIK3CA and a p85 regulatory subunit (PIK3R1, PIK3R2 or PIK3R3). Interacts with IRS1 in nuclear extracts. Interacts with RUFY3. Interacts with RASD2. Interacts with APPL1. Interacts with HRAS and KRAS. Interaction with HRAS/KRAS is required for PI3K pathway signaling and cell proliferation stimulated by EGF and FGF2. Interacts with FAM83B; activates the PI3K/AKT signaling cascade.</text>
</comment>
<comment type="interaction">
    <interactant intactId="EBI-1373130">
        <id>P32871</id>
    </interactant>
    <interactant intactId="EBI-520244">
        <id>P23727</id>
        <label>PIK3R1</label>
    </interactant>
    <organismsDiffer>false</organismsDiffer>
    <experiments>4</experiments>
</comment>
<comment type="interaction">
    <interactant intactId="EBI-1373130">
        <id>P32871</id>
    </interactant>
    <interactant intactId="EBI-1555978">
        <id>P23726</id>
        <label>PIK3R2</label>
    </interactant>
    <organismsDiffer>false</organismsDiffer>
    <experiments>3</experiments>
</comment>
<comment type="domain">
    <text evidence="1">The PI3K-ABD domain and the PI3K-RBD domain interact with the PI3K/PI4K kinase domain. The C2 PI3K-type domain may facilitate the recruitment to the plasma membrane. The inhibitory interactions with PIK3R1 are mediated by the PI3K-ABD domain and the C2 PI3K-type domain with the iSH2 (inter-SH2) region of PIK3R1, and the C2 PI3K-type domain, the PI3K helical domain, and the PI3K/PI4K kinase domain with the nSH2 (N-terminal SH2) region of PIK3R1.</text>
</comment>
<comment type="similarity">
    <text evidence="4 6 7">Belongs to the PI3/PI4-kinase family.</text>
</comment>
<gene>
    <name type="primary">PIK3CA</name>
</gene>
<feature type="chain" id="PRO_0000088784" description="Phosphatidylinositol 4,5-bisphosphate 3-kinase catalytic subunit alpha isoform">
    <location>
        <begin position="1"/>
        <end position="1068"/>
    </location>
</feature>
<feature type="domain" description="PI3K-ABD" evidence="4">
    <location>
        <begin position="16"/>
        <end position="105"/>
    </location>
</feature>
<feature type="domain" description="PI3K-RBD" evidence="6">
    <location>
        <begin position="187"/>
        <end position="289"/>
    </location>
</feature>
<feature type="domain" description="C2 PI3K-type" evidence="7">
    <location>
        <begin position="330"/>
        <end position="487"/>
    </location>
</feature>
<feature type="domain" description="PIK helical" evidence="5">
    <location>
        <begin position="517"/>
        <end position="694"/>
    </location>
</feature>
<feature type="domain" description="PI3K/PI4K catalytic" evidence="3">
    <location>
        <begin position="765"/>
        <end position="1051"/>
    </location>
</feature>
<feature type="region of interest" description="G-loop" evidence="3">
    <location>
        <begin position="771"/>
        <end position="777"/>
    </location>
</feature>
<feature type="region of interest" description="Catalytic loop" evidence="3">
    <location>
        <begin position="912"/>
        <end position="920"/>
    </location>
</feature>
<feature type="region of interest" description="Activation loop" evidence="3">
    <location>
        <begin position="931"/>
        <end position="957"/>
    </location>
</feature>
<feature type="strand" evidence="14">
    <location>
        <begin position="18"/>
        <end position="25"/>
    </location>
</feature>
<feature type="strand" evidence="14">
    <location>
        <begin position="31"/>
        <end position="37"/>
    </location>
</feature>
<feature type="helix" evidence="14">
    <location>
        <begin position="42"/>
        <end position="52"/>
    </location>
</feature>
<feature type="helix" evidence="14">
    <location>
        <begin position="53"/>
        <end position="55"/>
    </location>
</feature>
<feature type="helix" evidence="14">
    <location>
        <begin position="59"/>
        <end position="61"/>
    </location>
</feature>
<feature type="helix" evidence="14">
    <location>
        <begin position="65"/>
        <end position="67"/>
    </location>
</feature>
<feature type="strand" evidence="14">
    <location>
        <begin position="69"/>
        <end position="74"/>
    </location>
</feature>
<feature type="strand" evidence="14">
    <location>
        <begin position="79"/>
        <end position="82"/>
    </location>
</feature>
<feature type="helix" evidence="14">
    <location>
        <begin position="89"/>
        <end position="91"/>
    </location>
</feature>
<feature type="strand" evidence="14">
    <location>
        <begin position="94"/>
        <end position="102"/>
    </location>
</feature>
<name>PK3CA_BOVIN</name>
<organism>
    <name type="scientific">Bos taurus</name>
    <name type="common">Bovine</name>
    <dbReference type="NCBI Taxonomy" id="9913"/>
    <lineage>
        <taxon>Eukaryota</taxon>
        <taxon>Metazoa</taxon>
        <taxon>Chordata</taxon>
        <taxon>Craniata</taxon>
        <taxon>Vertebrata</taxon>
        <taxon>Euteleostomi</taxon>
        <taxon>Mammalia</taxon>
        <taxon>Eutheria</taxon>
        <taxon>Laurasiatheria</taxon>
        <taxon>Artiodactyla</taxon>
        <taxon>Ruminantia</taxon>
        <taxon>Pecora</taxon>
        <taxon>Bovidae</taxon>
        <taxon>Bovinae</taxon>
        <taxon>Bos</taxon>
    </lineage>
</organism>
<keyword id="KW-0002">3D-structure</keyword>
<keyword id="KW-0037">Angiogenesis</keyword>
<keyword id="KW-0067">ATP-binding</keyword>
<keyword id="KW-0903">Direct protein sequencing</keyword>
<keyword id="KW-0418">Kinase</keyword>
<keyword id="KW-0547">Nucleotide-binding</keyword>
<keyword id="KW-0581">Phagocytosis</keyword>
<keyword id="KW-0656">Proto-oncogene</keyword>
<keyword id="KW-1185">Reference proteome</keyword>
<keyword id="KW-0723">Serine/threonine-protein kinase</keyword>
<keyword id="KW-0808">Transferase</keyword>
<protein>
    <recommendedName>
        <fullName>Phosphatidylinositol 4,5-bisphosphate 3-kinase catalytic subunit alpha isoform</fullName>
        <shortName>PI3-kinase subunit alpha</shortName>
        <shortName>PI3K-alpha</shortName>
        <shortName>PI3Kalpha</shortName>
        <shortName>PtdIns-3-kinase subunit alpha</shortName>
        <ecNumber evidence="8 9 13">2.7.1.137</ecNumber>
        <ecNumber evidence="1">2.7.1.153</ecNumber>
    </recommendedName>
    <alternativeName>
        <fullName>Phosphatidylinositol 4,5-bisphosphate 3-kinase 110 kDa catalytic subunit alpha</fullName>
        <shortName>PtdIns-3-kinase subunit p110-alpha</shortName>
        <shortName>p110alpha</shortName>
    </alternativeName>
    <alternativeName>
        <fullName>Phosphoinositide-3-kinase catalytic alpha polypeptide</fullName>
    </alternativeName>
    <alternativeName>
        <fullName>Serine/threonine protein kinase PIK3CA</fullName>
        <ecNumber evidence="9 10">2.7.11.1</ecNumber>
    </alternativeName>
</protein>